<accession>A9H0I1</accession>
<accession>B5ZJV1</accession>
<reference key="1">
    <citation type="journal article" date="2009" name="BMC Genomics">
        <title>Complete genome sequence of the sugarcane nitrogen-fixing endophyte Gluconacetobacter diazotrophicus Pal5.</title>
        <authorList>
            <person name="Bertalan M."/>
            <person name="Albano R."/>
            <person name="de Padua V."/>
            <person name="Rouws L."/>
            <person name="Rojas C."/>
            <person name="Hemerly A."/>
            <person name="Teixeira K."/>
            <person name="Schwab S."/>
            <person name="Araujo J."/>
            <person name="Oliveira A."/>
            <person name="Franca L."/>
            <person name="Magalhaes V."/>
            <person name="Alqueres S."/>
            <person name="Cardoso A."/>
            <person name="Almeida W."/>
            <person name="Loureiro M.M."/>
            <person name="Nogueira E."/>
            <person name="Cidade D."/>
            <person name="Oliveira D."/>
            <person name="Simao T."/>
            <person name="Macedo J."/>
            <person name="Valadao A."/>
            <person name="Dreschsel M."/>
            <person name="Freitas F."/>
            <person name="Vidal M."/>
            <person name="Guedes H."/>
            <person name="Rodrigues E."/>
            <person name="Meneses C."/>
            <person name="Brioso P."/>
            <person name="Pozzer L."/>
            <person name="Figueiredo D."/>
            <person name="Montano H."/>
            <person name="Junior J."/>
            <person name="de Souza Filho G."/>
            <person name="Martin Quintana Flores V."/>
            <person name="Ferreira B."/>
            <person name="Branco A."/>
            <person name="Gonzalez P."/>
            <person name="Guillobel H."/>
            <person name="Lemos M."/>
            <person name="Seibel L."/>
            <person name="Macedo J."/>
            <person name="Alves-Ferreira M."/>
            <person name="Sachetto-Martins G."/>
            <person name="Coelho A."/>
            <person name="Santos E."/>
            <person name="Amaral G."/>
            <person name="Neves A."/>
            <person name="Pacheco A.B."/>
            <person name="Carvalho D."/>
            <person name="Lery L."/>
            <person name="Bisch P."/>
            <person name="Rossle S.C."/>
            <person name="Urmenyi T."/>
            <person name="Rael Pereira A."/>
            <person name="Silva R."/>
            <person name="Rondinelli E."/>
            <person name="von Kruger W."/>
            <person name="Martins O."/>
            <person name="Baldani J.I."/>
            <person name="Ferreira P.C."/>
        </authorList>
    </citation>
    <scope>NUCLEOTIDE SEQUENCE [LARGE SCALE GENOMIC DNA]</scope>
    <source>
        <strain>ATCC 49037 / DSM 5601 / CCUG 37298 / CIP 103539 / LMG 7603 / PAl5</strain>
    </source>
</reference>
<reference key="2">
    <citation type="journal article" date="2010" name="Stand. Genomic Sci.">
        <title>Two genome sequences of the same bacterial strain, Gluconacetobacter diazotrophicus PAl 5, suggest a new standard in genome sequence submission.</title>
        <authorList>
            <person name="Giongo A."/>
            <person name="Tyler H.L."/>
            <person name="Zipperer U.N."/>
            <person name="Triplett E.W."/>
        </authorList>
    </citation>
    <scope>NUCLEOTIDE SEQUENCE [LARGE SCALE GENOMIC DNA]</scope>
    <source>
        <strain>ATCC 49037 / DSM 5601 / CCUG 37298 / CIP 103539 / LMG 7603 / PAl5</strain>
    </source>
</reference>
<dbReference type="EC" id="2.7.8.13" evidence="1"/>
<dbReference type="EMBL" id="AM889285">
    <property type="protein sequence ID" value="CAP57131.1"/>
    <property type="molecule type" value="Genomic_DNA"/>
</dbReference>
<dbReference type="EMBL" id="CP001189">
    <property type="protein sequence ID" value="ACI52903.1"/>
    <property type="molecule type" value="Genomic_DNA"/>
</dbReference>
<dbReference type="RefSeq" id="WP_012227597.1">
    <property type="nucleotide sequence ID" value="NC_010125.1"/>
</dbReference>
<dbReference type="RefSeq" id="WP_012554799.1">
    <property type="nucleotide sequence ID" value="NC_011365.1"/>
</dbReference>
<dbReference type="SMR" id="A9H0I1"/>
<dbReference type="STRING" id="272568.GDI3188"/>
<dbReference type="KEGG" id="gdi:GDI3188"/>
<dbReference type="KEGG" id="gdj:Gdia_3173"/>
<dbReference type="eggNOG" id="COG0472">
    <property type="taxonomic scope" value="Bacteria"/>
</dbReference>
<dbReference type="HOGENOM" id="CLU_023982_0_0_5"/>
<dbReference type="OrthoDB" id="9805475at2"/>
<dbReference type="UniPathway" id="UPA00219"/>
<dbReference type="Proteomes" id="UP000001176">
    <property type="component" value="Chromosome"/>
</dbReference>
<dbReference type="GO" id="GO:0005886">
    <property type="term" value="C:plasma membrane"/>
    <property type="evidence" value="ECO:0007669"/>
    <property type="project" value="UniProtKB-SubCell"/>
</dbReference>
<dbReference type="GO" id="GO:0046872">
    <property type="term" value="F:metal ion binding"/>
    <property type="evidence" value="ECO:0007669"/>
    <property type="project" value="UniProtKB-KW"/>
</dbReference>
<dbReference type="GO" id="GO:0008963">
    <property type="term" value="F:phospho-N-acetylmuramoyl-pentapeptide-transferase activity"/>
    <property type="evidence" value="ECO:0007669"/>
    <property type="project" value="UniProtKB-UniRule"/>
</dbReference>
<dbReference type="GO" id="GO:0051992">
    <property type="term" value="F:UDP-N-acetylmuramoyl-L-alanyl-D-glutamyl-meso-2,6-diaminopimelyl-D-alanyl-D-alanine:undecaprenyl-phosphate transferase activity"/>
    <property type="evidence" value="ECO:0007669"/>
    <property type="project" value="RHEA"/>
</dbReference>
<dbReference type="GO" id="GO:0051301">
    <property type="term" value="P:cell division"/>
    <property type="evidence" value="ECO:0007669"/>
    <property type="project" value="UniProtKB-KW"/>
</dbReference>
<dbReference type="GO" id="GO:0071555">
    <property type="term" value="P:cell wall organization"/>
    <property type="evidence" value="ECO:0007669"/>
    <property type="project" value="UniProtKB-KW"/>
</dbReference>
<dbReference type="GO" id="GO:0009252">
    <property type="term" value="P:peptidoglycan biosynthetic process"/>
    <property type="evidence" value="ECO:0007669"/>
    <property type="project" value="UniProtKB-UniRule"/>
</dbReference>
<dbReference type="GO" id="GO:0008360">
    <property type="term" value="P:regulation of cell shape"/>
    <property type="evidence" value="ECO:0007669"/>
    <property type="project" value="UniProtKB-KW"/>
</dbReference>
<dbReference type="CDD" id="cd06852">
    <property type="entry name" value="GT_MraY"/>
    <property type="match status" value="1"/>
</dbReference>
<dbReference type="HAMAP" id="MF_00038">
    <property type="entry name" value="MraY"/>
    <property type="match status" value="1"/>
</dbReference>
<dbReference type="InterPro" id="IPR000715">
    <property type="entry name" value="Glycosyl_transferase_4"/>
</dbReference>
<dbReference type="InterPro" id="IPR003524">
    <property type="entry name" value="PNAcMuramoyl-5peptid_Trfase"/>
</dbReference>
<dbReference type="InterPro" id="IPR018480">
    <property type="entry name" value="PNAcMuramoyl-5peptid_Trfase_CS"/>
</dbReference>
<dbReference type="NCBIfam" id="TIGR00445">
    <property type="entry name" value="mraY"/>
    <property type="match status" value="1"/>
</dbReference>
<dbReference type="PANTHER" id="PTHR22926">
    <property type="entry name" value="PHOSPHO-N-ACETYLMURAMOYL-PENTAPEPTIDE-TRANSFERASE"/>
    <property type="match status" value="1"/>
</dbReference>
<dbReference type="PANTHER" id="PTHR22926:SF5">
    <property type="entry name" value="PHOSPHO-N-ACETYLMURAMOYL-PENTAPEPTIDE-TRANSFERASE HOMOLOG"/>
    <property type="match status" value="1"/>
</dbReference>
<dbReference type="Pfam" id="PF00953">
    <property type="entry name" value="Glycos_transf_4"/>
    <property type="match status" value="1"/>
</dbReference>
<dbReference type="Pfam" id="PF10555">
    <property type="entry name" value="MraY_sig1"/>
    <property type="match status" value="1"/>
</dbReference>
<dbReference type="PROSITE" id="PS01347">
    <property type="entry name" value="MRAY_1"/>
    <property type="match status" value="1"/>
</dbReference>
<dbReference type="PROSITE" id="PS01348">
    <property type="entry name" value="MRAY_2"/>
    <property type="match status" value="1"/>
</dbReference>
<gene>
    <name evidence="1" type="primary">mraY</name>
    <name type="ordered locus">GDI3188</name>
    <name type="ordered locus">Gdia_3173</name>
</gene>
<protein>
    <recommendedName>
        <fullName evidence="1">Phospho-N-acetylmuramoyl-pentapeptide-transferase</fullName>
        <ecNumber evidence="1">2.7.8.13</ecNumber>
    </recommendedName>
    <alternativeName>
        <fullName evidence="1">UDP-MurNAc-pentapeptide phosphotransferase</fullName>
    </alternativeName>
</protein>
<evidence type="ECO:0000255" key="1">
    <source>
        <dbReference type="HAMAP-Rule" id="MF_00038"/>
    </source>
</evidence>
<evidence type="ECO:0000305" key="2"/>
<name>MRAY_GLUDA</name>
<organism>
    <name type="scientific">Gluconacetobacter diazotrophicus (strain ATCC 49037 / DSM 5601 / CCUG 37298 / CIP 103539 / LMG 7603 / PAl5)</name>
    <dbReference type="NCBI Taxonomy" id="272568"/>
    <lineage>
        <taxon>Bacteria</taxon>
        <taxon>Pseudomonadati</taxon>
        <taxon>Pseudomonadota</taxon>
        <taxon>Alphaproteobacteria</taxon>
        <taxon>Acetobacterales</taxon>
        <taxon>Acetobacteraceae</taxon>
        <taxon>Gluconacetobacter</taxon>
    </lineage>
</organism>
<keyword id="KW-0131">Cell cycle</keyword>
<keyword id="KW-0132">Cell division</keyword>
<keyword id="KW-0997">Cell inner membrane</keyword>
<keyword id="KW-1003">Cell membrane</keyword>
<keyword id="KW-0133">Cell shape</keyword>
<keyword id="KW-0961">Cell wall biogenesis/degradation</keyword>
<keyword id="KW-0460">Magnesium</keyword>
<keyword id="KW-0472">Membrane</keyword>
<keyword id="KW-0479">Metal-binding</keyword>
<keyword id="KW-0573">Peptidoglycan synthesis</keyword>
<keyword id="KW-1185">Reference proteome</keyword>
<keyword id="KW-0808">Transferase</keyword>
<keyword id="KW-0812">Transmembrane</keyword>
<keyword id="KW-1133">Transmembrane helix</keyword>
<feature type="chain" id="PRO_1000074545" description="Phospho-N-acetylmuramoyl-pentapeptide-transferase">
    <location>
        <begin position="1"/>
        <end position="363"/>
    </location>
</feature>
<feature type="transmembrane region" description="Helical" evidence="1">
    <location>
        <begin position="27"/>
        <end position="47"/>
    </location>
</feature>
<feature type="transmembrane region" description="Helical" evidence="1">
    <location>
        <begin position="76"/>
        <end position="96"/>
    </location>
</feature>
<feature type="transmembrane region" description="Helical" evidence="1">
    <location>
        <begin position="97"/>
        <end position="117"/>
    </location>
</feature>
<feature type="transmembrane region" description="Helical" evidence="1">
    <location>
        <begin position="137"/>
        <end position="157"/>
    </location>
</feature>
<feature type="transmembrane region" description="Helical" evidence="1">
    <location>
        <begin position="171"/>
        <end position="191"/>
    </location>
</feature>
<feature type="transmembrane region" description="Helical" evidence="1">
    <location>
        <begin position="202"/>
        <end position="222"/>
    </location>
</feature>
<feature type="transmembrane region" description="Helical" evidence="1">
    <location>
        <begin position="226"/>
        <end position="246"/>
    </location>
</feature>
<feature type="transmembrane region" description="Helical" evidence="1">
    <location>
        <begin position="248"/>
        <end position="268"/>
    </location>
</feature>
<feature type="transmembrane region" description="Helical" evidence="1">
    <location>
        <begin position="271"/>
        <end position="291"/>
    </location>
</feature>
<feature type="transmembrane region" description="Helical" evidence="1">
    <location>
        <begin position="292"/>
        <end position="312"/>
    </location>
</feature>
<feature type="transmembrane region" description="Helical" evidence="1">
    <location>
        <begin position="340"/>
        <end position="360"/>
    </location>
</feature>
<feature type="sequence conflict" description="In Ref. 2; ACI52903." evidence="2" ref="2">
    <original>S</original>
    <variation>A</variation>
    <location>
        <position position="11"/>
    </location>
</feature>
<comment type="function">
    <text evidence="1">Catalyzes the initial step of the lipid cycle reactions in the biosynthesis of the cell wall peptidoglycan: transfers peptidoglycan precursor phospho-MurNAc-pentapeptide from UDP-MurNAc-pentapeptide onto the lipid carrier undecaprenyl phosphate, yielding undecaprenyl-pyrophosphoryl-MurNAc-pentapeptide, known as lipid I.</text>
</comment>
<comment type="catalytic activity">
    <reaction evidence="1">
        <text>UDP-N-acetyl-alpha-D-muramoyl-L-alanyl-gamma-D-glutamyl-meso-2,6-diaminopimeloyl-D-alanyl-D-alanine + di-trans,octa-cis-undecaprenyl phosphate = di-trans,octa-cis-undecaprenyl diphospho-N-acetyl-alpha-D-muramoyl-L-alanyl-D-glutamyl-meso-2,6-diaminopimeloyl-D-alanyl-D-alanine + UMP</text>
        <dbReference type="Rhea" id="RHEA:28386"/>
        <dbReference type="ChEBI" id="CHEBI:57865"/>
        <dbReference type="ChEBI" id="CHEBI:60392"/>
        <dbReference type="ChEBI" id="CHEBI:61386"/>
        <dbReference type="ChEBI" id="CHEBI:61387"/>
        <dbReference type="EC" id="2.7.8.13"/>
    </reaction>
</comment>
<comment type="cofactor">
    <cofactor evidence="1">
        <name>Mg(2+)</name>
        <dbReference type="ChEBI" id="CHEBI:18420"/>
    </cofactor>
</comment>
<comment type="pathway">
    <text evidence="1">Cell wall biogenesis; peptidoglycan biosynthesis.</text>
</comment>
<comment type="subcellular location">
    <subcellularLocation>
        <location evidence="1">Cell inner membrane</location>
        <topology evidence="1">Multi-pass membrane protein</topology>
    </subcellularLocation>
</comment>
<comment type="similarity">
    <text evidence="1">Belongs to the glycosyltransferase 4 family. MraY subfamily.</text>
</comment>
<proteinExistence type="inferred from homology"/>
<sequence length="363" mass="39302">MLYDLIQHHGSAHVTVLNLFRYITFRAGAACLTALAISLLLGNPLIAQLRRIQREGQPIRALGPERHILEKAGTPTMGGVLILAALFGSTLLWADLTDGYVWAVLLTTLSFGAVGFADDYLKLSRRNTAGVSKRMRLGCEFAASLVGGYWMQSLMPADLANHLAFPFLKEWLLPLGFAFPLFAMITITGFGNAVNFTDGLDGLAIVPVIIAALVFGLISYLVGNHVFADYLQLHAVPGTGELCVFCSALVGAGLGFLWFNAPPAAVFMGDTGSLSLGGALGAIAVAVKHELVLCIVGGLFVVETLSVIIQVFWFRRTGRRVFLMAPLHHHFEKKGWQEPKIVIRFWIVSIVLGLCGLATLKLR</sequence>